<reference key="1">
    <citation type="submission" date="2006-09" db="EMBL/GenBank/DDBJ databases">
        <authorList>
            <consortium name="The Klebsiella pneumonia Genome Sequencing Project"/>
            <person name="McClelland M."/>
            <person name="Sanderson E.K."/>
            <person name="Spieth J."/>
            <person name="Clifton W.S."/>
            <person name="Latreille P."/>
            <person name="Sabo A."/>
            <person name="Pepin K."/>
            <person name="Bhonagiri V."/>
            <person name="Porwollik S."/>
            <person name="Ali J."/>
            <person name="Wilson R.K."/>
        </authorList>
    </citation>
    <scope>NUCLEOTIDE SEQUENCE [LARGE SCALE GENOMIC DNA]</scope>
    <source>
        <strain>ATCC 700721 / MGH 78578</strain>
    </source>
</reference>
<organism>
    <name type="scientific">Klebsiella pneumoniae subsp. pneumoniae (strain ATCC 700721 / MGH 78578)</name>
    <dbReference type="NCBI Taxonomy" id="272620"/>
    <lineage>
        <taxon>Bacteria</taxon>
        <taxon>Pseudomonadati</taxon>
        <taxon>Pseudomonadota</taxon>
        <taxon>Gammaproteobacteria</taxon>
        <taxon>Enterobacterales</taxon>
        <taxon>Enterobacteriaceae</taxon>
        <taxon>Klebsiella/Raoultella group</taxon>
        <taxon>Klebsiella</taxon>
        <taxon>Klebsiella pneumoniae complex</taxon>
    </lineage>
</organism>
<name>FSA_KLEP7</name>
<keyword id="KW-0119">Carbohydrate metabolism</keyword>
<keyword id="KW-0963">Cytoplasm</keyword>
<keyword id="KW-0456">Lyase</keyword>
<keyword id="KW-0704">Schiff base</keyword>
<accession>A6TGD7</accession>
<feature type="chain" id="PRO_1000050597" description="Fructose-6-phosphate aldolase">
    <location>
        <begin position="1"/>
        <end position="220"/>
    </location>
</feature>
<feature type="active site" description="Schiff-base intermediate with substrate" evidence="1">
    <location>
        <position position="85"/>
    </location>
</feature>
<comment type="function">
    <text evidence="1">Catalyzes the reversible formation of fructose 6-phosphate from dihydroxyacetone and D-glyceraldehyde 3-phosphate via an aldolization reaction.</text>
</comment>
<comment type="catalytic activity">
    <reaction evidence="1">
        <text>beta-D-fructose 6-phosphate = dihydroxyacetone + D-glyceraldehyde 3-phosphate</text>
        <dbReference type="Rhea" id="RHEA:28002"/>
        <dbReference type="ChEBI" id="CHEBI:16016"/>
        <dbReference type="ChEBI" id="CHEBI:57634"/>
        <dbReference type="ChEBI" id="CHEBI:59776"/>
    </reaction>
</comment>
<comment type="subunit">
    <text evidence="1">Homodecamer.</text>
</comment>
<comment type="subcellular location">
    <subcellularLocation>
        <location evidence="1">Cytoplasm</location>
    </subcellularLocation>
</comment>
<comment type="similarity">
    <text evidence="1">Belongs to the transaldolase family. Type 3A subfamily.</text>
</comment>
<gene>
    <name evidence="1" type="primary">fsa</name>
    <name type="ordered locus">KPN78578_41970</name>
    <name type="ORF">KPN_04242</name>
</gene>
<sequence>MELYLDTANVAEVERLARIYPLAGVTTNPSIIAAGKVPVWDVLPRLQKAVGPEGTLFAQTMSRDAQGMVEEAKRLSNAVPGIVVKIPVTAEGLAAIKLLKKEGIPTLGTAVYSASQGLLAALAGAKYVAPYVNRVDAQGGDGIRMVQELQSLLEMHAPESKVLAASFKTPRQALDCLLAGCEAITLPLDVAQQMLGTPAVESAIEKFEQDWNNAFGALNL</sequence>
<proteinExistence type="inferred from homology"/>
<dbReference type="EC" id="4.1.2.-" evidence="1"/>
<dbReference type="EMBL" id="CP000647">
    <property type="protein sequence ID" value="ABR79621.1"/>
    <property type="molecule type" value="Genomic_DNA"/>
</dbReference>
<dbReference type="RefSeq" id="WP_004212041.1">
    <property type="nucleotide sequence ID" value="NC_009648.1"/>
</dbReference>
<dbReference type="SMR" id="A6TGD7"/>
<dbReference type="STRING" id="272620.KPN_04242"/>
<dbReference type="PaxDb" id="272620-KPN_04242"/>
<dbReference type="EnsemblBacteria" id="ABR79621">
    <property type="protein sequence ID" value="ABR79621"/>
    <property type="gene ID" value="KPN_04242"/>
</dbReference>
<dbReference type="KEGG" id="kpn:KPN_04242"/>
<dbReference type="HOGENOM" id="CLU_079764_2_0_6"/>
<dbReference type="Proteomes" id="UP000000265">
    <property type="component" value="Chromosome"/>
</dbReference>
<dbReference type="GO" id="GO:0005737">
    <property type="term" value="C:cytoplasm"/>
    <property type="evidence" value="ECO:0007669"/>
    <property type="project" value="UniProtKB-SubCell"/>
</dbReference>
<dbReference type="GO" id="GO:0097023">
    <property type="term" value="F:fructose 6-phosphate aldolase activity"/>
    <property type="evidence" value="ECO:0007669"/>
    <property type="project" value="RHEA"/>
</dbReference>
<dbReference type="GO" id="GO:0006000">
    <property type="term" value="P:fructose metabolic process"/>
    <property type="evidence" value="ECO:0007669"/>
    <property type="project" value="UniProtKB-UniRule"/>
</dbReference>
<dbReference type="CDD" id="cd00956">
    <property type="entry name" value="Transaldolase_FSA"/>
    <property type="match status" value="1"/>
</dbReference>
<dbReference type="FunFam" id="3.20.20.70:FF:000018">
    <property type="entry name" value="Probable transaldolase"/>
    <property type="match status" value="1"/>
</dbReference>
<dbReference type="Gene3D" id="3.20.20.70">
    <property type="entry name" value="Aldolase class I"/>
    <property type="match status" value="1"/>
</dbReference>
<dbReference type="HAMAP" id="MF_00496">
    <property type="entry name" value="F6P_aldolase"/>
    <property type="match status" value="1"/>
</dbReference>
<dbReference type="InterPro" id="IPR013785">
    <property type="entry name" value="Aldolase_TIM"/>
</dbReference>
<dbReference type="InterPro" id="IPR023001">
    <property type="entry name" value="F6P_aldolase"/>
</dbReference>
<dbReference type="InterPro" id="IPR001585">
    <property type="entry name" value="TAL/FSA"/>
</dbReference>
<dbReference type="InterPro" id="IPR004731">
    <property type="entry name" value="Transaldolase_3B/F6P_aldolase"/>
</dbReference>
<dbReference type="InterPro" id="IPR018225">
    <property type="entry name" value="Transaldolase_AS"/>
</dbReference>
<dbReference type="InterPro" id="IPR033919">
    <property type="entry name" value="TSA/FSA_arc/bac"/>
</dbReference>
<dbReference type="NCBIfam" id="TIGR00875">
    <property type="entry name" value="fsa_talC_mipB"/>
    <property type="match status" value="1"/>
</dbReference>
<dbReference type="NCBIfam" id="NF009296">
    <property type="entry name" value="PRK12653.1"/>
    <property type="match status" value="1"/>
</dbReference>
<dbReference type="PANTHER" id="PTHR10683:SF40">
    <property type="entry name" value="FRUCTOSE-6-PHOSPHATE ALDOLASE 1-RELATED"/>
    <property type="match status" value="1"/>
</dbReference>
<dbReference type="PANTHER" id="PTHR10683">
    <property type="entry name" value="TRANSALDOLASE"/>
    <property type="match status" value="1"/>
</dbReference>
<dbReference type="Pfam" id="PF00923">
    <property type="entry name" value="TAL_FSA"/>
    <property type="match status" value="1"/>
</dbReference>
<dbReference type="SUPFAM" id="SSF51569">
    <property type="entry name" value="Aldolase"/>
    <property type="match status" value="1"/>
</dbReference>
<dbReference type="PROSITE" id="PS01054">
    <property type="entry name" value="TRANSALDOLASE_1"/>
    <property type="match status" value="1"/>
</dbReference>
<dbReference type="PROSITE" id="PS00958">
    <property type="entry name" value="TRANSALDOLASE_2"/>
    <property type="match status" value="1"/>
</dbReference>
<evidence type="ECO:0000255" key="1">
    <source>
        <dbReference type="HAMAP-Rule" id="MF_00496"/>
    </source>
</evidence>
<protein>
    <recommendedName>
        <fullName evidence="1">Fructose-6-phosphate aldolase</fullName>
        <ecNumber evidence="1">4.1.2.-</ecNumber>
    </recommendedName>
</protein>